<sequence>MNATILVKIITPLSIALEKQAKIVTMSGEEGMFGVLPSHVPMIVSLKAGLVQVYIDDMHKSENTYLISGGVTEVTANYINIATETAINVTNLSEAEIATKLLDLQKTLSDQH</sequence>
<feature type="chain" id="PRO_1000056528" description="ATP synthase epsilon chain">
    <location>
        <begin position="1"/>
        <end position="112"/>
    </location>
</feature>
<evidence type="ECO:0000255" key="1">
    <source>
        <dbReference type="HAMAP-Rule" id="MF_00530"/>
    </source>
</evidence>
<keyword id="KW-0066">ATP synthesis</keyword>
<keyword id="KW-0997">Cell inner membrane</keyword>
<keyword id="KW-1003">Cell membrane</keyword>
<keyword id="KW-0139">CF(1)</keyword>
<keyword id="KW-0375">Hydrogen ion transport</keyword>
<keyword id="KW-0406">Ion transport</keyword>
<keyword id="KW-0472">Membrane</keyword>
<keyword id="KW-0813">Transport</keyword>
<organism>
    <name type="scientific">Rickettsia rickettsii (strain Sheila Smith)</name>
    <dbReference type="NCBI Taxonomy" id="392021"/>
    <lineage>
        <taxon>Bacteria</taxon>
        <taxon>Pseudomonadati</taxon>
        <taxon>Pseudomonadota</taxon>
        <taxon>Alphaproteobacteria</taxon>
        <taxon>Rickettsiales</taxon>
        <taxon>Rickettsiaceae</taxon>
        <taxon>Rickettsieae</taxon>
        <taxon>Rickettsia</taxon>
        <taxon>spotted fever group</taxon>
    </lineage>
</organism>
<accession>A8GTS5</accession>
<dbReference type="EMBL" id="CP000848">
    <property type="protein sequence ID" value="ABV76800.1"/>
    <property type="molecule type" value="Genomic_DNA"/>
</dbReference>
<dbReference type="RefSeq" id="WP_012151342.1">
    <property type="nucleotide sequence ID" value="NZ_CP121767.1"/>
</dbReference>
<dbReference type="SMR" id="A8GTS5"/>
<dbReference type="GeneID" id="79937844"/>
<dbReference type="KEGG" id="rri:A1G_06755"/>
<dbReference type="HOGENOM" id="CLU_084338_2_1_5"/>
<dbReference type="Proteomes" id="UP000006832">
    <property type="component" value="Chromosome"/>
</dbReference>
<dbReference type="GO" id="GO:0005886">
    <property type="term" value="C:plasma membrane"/>
    <property type="evidence" value="ECO:0007669"/>
    <property type="project" value="UniProtKB-SubCell"/>
</dbReference>
<dbReference type="GO" id="GO:0045259">
    <property type="term" value="C:proton-transporting ATP synthase complex"/>
    <property type="evidence" value="ECO:0007669"/>
    <property type="project" value="UniProtKB-KW"/>
</dbReference>
<dbReference type="GO" id="GO:0005524">
    <property type="term" value="F:ATP binding"/>
    <property type="evidence" value="ECO:0007669"/>
    <property type="project" value="UniProtKB-UniRule"/>
</dbReference>
<dbReference type="GO" id="GO:0046933">
    <property type="term" value="F:proton-transporting ATP synthase activity, rotational mechanism"/>
    <property type="evidence" value="ECO:0007669"/>
    <property type="project" value="UniProtKB-UniRule"/>
</dbReference>
<dbReference type="CDD" id="cd12152">
    <property type="entry name" value="F1-ATPase_delta"/>
    <property type="match status" value="1"/>
</dbReference>
<dbReference type="Gene3D" id="2.60.15.10">
    <property type="entry name" value="F0F1 ATP synthase delta/epsilon subunit, N-terminal"/>
    <property type="match status" value="1"/>
</dbReference>
<dbReference type="HAMAP" id="MF_00530">
    <property type="entry name" value="ATP_synth_epsil_bac"/>
    <property type="match status" value="1"/>
</dbReference>
<dbReference type="InterPro" id="IPR001469">
    <property type="entry name" value="ATP_synth_F1_dsu/esu"/>
</dbReference>
<dbReference type="InterPro" id="IPR020546">
    <property type="entry name" value="ATP_synth_F1_dsu/esu_N"/>
</dbReference>
<dbReference type="InterPro" id="IPR036771">
    <property type="entry name" value="ATPsynth_dsu/esu_N"/>
</dbReference>
<dbReference type="NCBIfam" id="TIGR01216">
    <property type="entry name" value="ATP_synt_epsi"/>
    <property type="match status" value="1"/>
</dbReference>
<dbReference type="NCBIfam" id="NF002403">
    <property type="entry name" value="PRK01474.1"/>
    <property type="match status" value="1"/>
</dbReference>
<dbReference type="PANTHER" id="PTHR13822">
    <property type="entry name" value="ATP SYNTHASE DELTA/EPSILON CHAIN"/>
    <property type="match status" value="1"/>
</dbReference>
<dbReference type="PANTHER" id="PTHR13822:SF10">
    <property type="entry name" value="ATP SYNTHASE EPSILON CHAIN, CHLOROPLASTIC"/>
    <property type="match status" value="1"/>
</dbReference>
<dbReference type="Pfam" id="PF02823">
    <property type="entry name" value="ATP-synt_DE_N"/>
    <property type="match status" value="1"/>
</dbReference>
<dbReference type="SUPFAM" id="SSF51344">
    <property type="entry name" value="Epsilon subunit of F1F0-ATP synthase N-terminal domain"/>
    <property type="match status" value="1"/>
</dbReference>
<name>ATPE_RICRS</name>
<protein>
    <recommendedName>
        <fullName evidence="1">ATP synthase epsilon chain</fullName>
    </recommendedName>
    <alternativeName>
        <fullName evidence="1">ATP synthase F1 sector epsilon subunit</fullName>
    </alternativeName>
    <alternativeName>
        <fullName evidence="1">F-ATPase epsilon subunit</fullName>
    </alternativeName>
</protein>
<gene>
    <name evidence="1" type="primary">atpC</name>
    <name type="ordered locus">A1G_06755</name>
</gene>
<proteinExistence type="inferred from homology"/>
<comment type="function">
    <text evidence="1">Produces ATP from ADP in the presence of a proton gradient across the membrane.</text>
</comment>
<comment type="subunit">
    <text evidence="1">F-type ATPases have 2 components, CF(1) - the catalytic core - and CF(0) - the membrane proton channel. CF(1) has five subunits: alpha(3), beta(3), gamma(1), delta(1), epsilon(1). CF(0) has three main subunits: a, b and c.</text>
</comment>
<comment type="subcellular location">
    <subcellularLocation>
        <location evidence="1">Cell inner membrane</location>
        <topology evidence="1">Peripheral membrane protein</topology>
    </subcellularLocation>
</comment>
<comment type="similarity">
    <text evidence="1">Belongs to the ATPase epsilon chain family.</text>
</comment>
<reference key="1">
    <citation type="submission" date="2007-09" db="EMBL/GenBank/DDBJ databases">
        <title>Complete genome sequence of Rickettsia rickettsii.</title>
        <authorList>
            <person name="Madan A."/>
            <person name="Fahey J."/>
            <person name="Helton E."/>
            <person name="Ketteman M."/>
            <person name="Madan A."/>
            <person name="Rodrigues S."/>
            <person name="Sanchez A."/>
            <person name="Dasch G."/>
            <person name="Eremeeva M."/>
        </authorList>
    </citation>
    <scope>NUCLEOTIDE SEQUENCE [LARGE SCALE GENOMIC DNA]</scope>
    <source>
        <strain>Sheila Smith</strain>
    </source>
</reference>